<accession>Q0SMK4</accession>
<accession>G0IQJ9</accession>
<comment type="function">
    <text evidence="1">Together with its co-chaperonin GroES, plays an essential role in assisting protein folding. The GroEL-GroES system forms a nano-cage that allows encapsulation of the non-native substrate proteins and provides a physical environment optimized to promote and accelerate protein folding.</text>
</comment>
<comment type="catalytic activity">
    <reaction evidence="1">
        <text>ATP + H2O + a folded polypeptide = ADP + phosphate + an unfolded polypeptide.</text>
        <dbReference type="EC" id="5.6.1.7"/>
    </reaction>
</comment>
<comment type="subunit">
    <text evidence="1">Forms a cylinder of 14 subunits composed of two heptameric rings stacked back-to-back. Interacts with the co-chaperonin GroES.</text>
</comment>
<comment type="subcellular location">
    <subcellularLocation>
        <location evidence="1">Cytoplasm</location>
    </subcellularLocation>
</comment>
<comment type="similarity">
    <text evidence="1">Belongs to the chaperonin (HSP60) family.</text>
</comment>
<proteinExistence type="inferred from homology"/>
<protein>
    <recommendedName>
        <fullName evidence="1">Chaperonin GroEL</fullName>
        <ecNumber evidence="1">5.6.1.7</ecNumber>
    </recommendedName>
    <alternativeName>
        <fullName evidence="1">60 kDa chaperonin</fullName>
    </alternativeName>
    <alternativeName>
        <fullName evidence="1">Chaperonin-60</fullName>
        <shortName evidence="1">Cpn60</shortName>
    </alternativeName>
</protein>
<keyword id="KW-0067">ATP-binding</keyword>
<keyword id="KW-0143">Chaperone</keyword>
<keyword id="KW-0963">Cytoplasm</keyword>
<keyword id="KW-0413">Isomerase</keyword>
<keyword id="KW-0547">Nucleotide-binding</keyword>
<keyword id="KW-0346">Stress response</keyword>
<evidence type="ECO:0000255" key="1">
    <source>
        <dbReference type="HAMAP-Rule" id="MF_00600"/>
    </source>
</evidence>
<gene>
    <name evidence="1" type="primary">groEL</name>
    <name evidence="1" type="synonym">groL</name>
    <name type="ordered locus">BAPKO_0693</name>
    <name type="ordered locus">BafPKo_0673</name>
</gene>
<name>CH60_BORAP</name>
<sequence length="545" mass="58897">MAKDIYFNEDARKSLLSGVEKLSNAVKVTLGPKGRNVLIDKKFGSPTVTKDGVSVAREIELENPFENMGAQLLKEVAIKTNDVAGDGTTTATVLAYAIAREGLKNVSSGINPIGIKKGIDHAVSLAAEKIRQSAKKITTKEEIAQVASISANNDSYIGEKIAEAMDKVGKDGVITVEESKTFDTTISYVEGMQFDRGYLSPYFSTNKENMSVSFDDAFILIYEKKISSIKELLPVLEKVLGTNKPLLIIAEDIEGDALAALVLNSVRGALKVCAIKSPGFGDRRKAMLEDIAVLTGGVLISEELGLTLETVEIEQLGQAKTIKVDKDNTTIINTGNKEQIKERSELIKKQIEDSTSEYDKEKLQERLAKLVGGVAVINVGAVTEVELKEKKHRVEDALSATRAAVEEGVVPGGGSTLIEVAMYLDTIDTSKLSYEEKQGFEIVKRSLEEPMRQIISNAGFEGSIYIHQIKTEKKGLGFDASSFKWVNMIESGIIDPAKVTRSALQNAASIAGLLLTTECAITDIKEEKNTSGGGGYPMDPGMGMM</sequence>
<organism>
    <name type="scientific">Borreliella afzelii (strain PKo)</name>
    <name type="common">Borrelia afzelii</name>
    <dbReference type="NCBI Taxonomy" id="390236"/>
    <lineage>
        <taxon>Bacteria</taxon>
        <taxon>Pseudomonadati</taxon>
        <taxon>Spirochaetota</taxon>
        <taxon>Spirochaetia</taxon>
        <taxon>Spirochaetales</taxon>
        <taxon>Borreliaceae</taxon>
        <taxon>Borreliella</taxon>
    </lineage>
</organism>
<dbReference type="EC" id="5.6.1.7" evidence="1"/>
<dbReference type="EMBL" id="CP000395">
    <property type="protein sequence ID" value="ABH01924.1"/>
    <property type="molecule type" value="Genomic_DNA"/>
</dbReference>
<dbReference type="EMBL" id="CP002933">
    <property type="protein sequence ID" value="AEL69869.1"/>
    <property type="molecule type" value="Genomic_DNA"/>
</dbReference>
<dbReference type="RefSeq" id="WP_004790077.1">
    <property type="nucleotide sequence ID" value="NZ_CP160066.1"/>
</dbReference>
<dbReference type="SMR" id="Q0SMK4"/>
<dbReference type="STRING" id="29518.BLA32_00990"/>
<dbReference type="GeneID" id="83866129"/>
<dbReference type="KEGG" id="baf:BAPKO_0693"/>
<dbReference type="KEGG" id="bafz:BafPKo_0673"/>
<dbReference type="PATRIC" id="fig|390236.22.peg.642"/>
<dbReference type="eggNOG" id="COG0459">
    <property type="taxonomic scope" value="Bacteria"/>
</dbReference>
<dbReference type="HOGENOM" id="CLU_016503_3_0_12"/>
<dbReference type="OrthoDB" id="9766614at2"/>
<dbReference type="Proteomes" id="UP000005216">
    <property type="component" value="Chromosome"/>
</dbReference>
<dbReference type="GO" id="GO:0005737">
    <property type="term" value="C:cytoplasm"/>
    <property type="evidence" value="ECO:0007669"/>
    <property type="project" value="UniProtKB-SubCell"/>
</dbReference>
<dbReference type="GO" id="GO:0005524">
    <property type="term" value="F:ATP binding"/>
    <property type="evidence" value="ECO:0007669"/>
    <property type="project" value="UniProtKB-UniRule"/>
</dbReference>
<dbReference type="GO" id="GO:0140662">
    <property type="term" value="F:ATP-dependent protein folding chaperone"/>
    <property type="evidence" value="ECO:0007669"/>
    <property type="project" value="InterPro"/>
</dbReference>
<dbReference type="GO" id="GO:0016853">
    <property type="term" value="F:isomerase activity"/>
    <property type="evidence" value="ECO:0007669"/>
    <property type="project" value="UniProtKB-KW"/>
</dbReference>
<dbReference type="GO" id="GO:0051082">
    <property type="term" value="F:unfolded protein binding"/>
    <property type="evidence" value="ECO:0007669"/>
    <property type="project" value="UniProtKB-UniRule"/>
</dbReference>
<dbReference type="GO" id="GO:0042026">
    <property type="term" value="P:protein refolding"/>
    <property type="evidence" value="ECO:0007669"/>
    <property type="project" value="UniProtKB-UniRule"/>
</dbReference>
<dbReference type="CDD" id="cd03344">
    <property type="entry name" value="GroEL"/>
    <property type="match status" value="1"/>
</dbReference>
<dbReference type="FunFam" id="3.50.7.10:FF:000001">
    <property type="entry name" value="60 kDa chaperonin"/>
    <property type="match status" value="1"/>
</dbReference>
<dbReference type="Gene3D" id="3.50.7.10">
    <property type="entry name" value="GroEL"/>
    <property type="match status" value="1"/>
</dbReference>
<dbReference type="Gene3D" id="1.10.560.10">
    <property type="entry name" value="GroEL-like equatorial domain"/>
    <property type="match status" value="1"/>
</dbReference>
<dbReference type="Gene3D" id="3.30.260.10">
    <property type="entry name" value="TCP-1-like chaperonin intermediate domain"/>
    <property type="match status" value="1"/>
</dbReference>
<dbReference type="HAMAP" id="MF_00600">
    <property type="entry name" value="CH60"/>
    <property type="match status" value="1"/>
</dbReference>
<dbReference type="InterPro" id="IPR018370">
    <property type="entry name" value="Chaperonin_Cpn60_CS"/>
</dbReference>
<dbReference type="InterPro" id="IPR001844">
    <property type="entry name" value="Cpn60/GroEL"/>
</dbReference>
<dbReference type="InterPro" id="IPR002423">
    <property type="entry name" value="Cpn60/GroEL/TCP-1"/>
</dbReference>
<dbReference type="InterPro" id="IPR027409">
    <property type="entry name" value="GroEL-like_apical_dom_sf"/>
</dbReference>
<dbReference type="InterPro" id="IPR027413">
    <property type="entry name" value="GROEL-like_equatorial_sf"/>
</dbReference>
<dbReference type="InterPro" id="IPR027410">
    <property type="entry name" value="TCP-1-like_intermed_sf"/>
</dbReference>
<dbReference type="NCBIfam" id="TIGR02348">
    <property type="entry name" value="GroEL"/>
    <property type="match status" value="1"/>
</dbReference>
<dbReference type="NCBIfam" id="NF000592">
    <property type="entry name" value="PRK00013.1"/>
    <property type="match status" value="1"/>
</dbReference>
<dbReference type="NCBIfam" id="NF009487">
    <property type="entry name" value="PRK12849.1"/>
    <property type="match status" value="1"/>
</dbReference>
<dbReference type="NCBIfam" id="NF009488">
    <property type="entry name" value="PRK12850.1"/>
    <property type="match status" value="1"/>
</dbReference>
<dbReference type="NCBIfam" id="NF009489">
    <property type="entry name" value="PRK12851.1"/>
    <property type="match status" value="1"/>
</dbReference>
<dbReference type="PANTHER" id="PTHR45633">
    <property type="entry name" value="60 KDA HEAT SHOCK PROTEIN, MITOCHONDRIAL"/>
    <property type="match status" value="1"/>
</dbReference>
<dbReference type="Pfam" id="PF00118">
    <property type="entry name" value="Cpn60_TCP1"/>
    <property type="match status" value="1"/>
</dbReference>
<dbReference type="PRINTS" id="PR00298">
    <property type="entry name" value="CHAPERONIN60"/>
</dbReference>
<dbReference type="SUPFAM" id="SSF52029">
    <property type="entry name" value="GroEL apical domain-like"/>
    <property type="match status" value="1"/>
</dbReference>
<dbReference type="SUPFAM" id="SSF48592">
    <property type="entry name" value="GroEL equatorial domain-like"/>
    <property type="match status" value="1"/>
</dbReference>
<dbReference type="SUPFAM" id="SSF54849">
    <property type="entry name" value="GroEL-intermediate domain like"/>
    <property type="match status" value="1"/>
</dbReference>
<dbReference type="PROSITE" id="PS00296">
    <property type="entry name" value="CHAPERONINS_CPN60"/>
    <property type="match status" value="1"/>
</dbReference>
<reference key="1">
    <citation type="journal article" date="2006" name="BMC Genomics">
        <title>Comparative genome analysis: selection pressure on the Borrelia vls cassettes is essential for infectivity.</title>
        <authorList>
            <person name="Gloeckner G."/>
            <person name="Schulte-Spechtel U."/>
            <person name="Schilhabel M."/>
            <person name="Felder M."/>
            <person name="Suehnel J."/>
            <person name="Wilske B."/>
            <person name="Platzer M."/>
        </authorList>
    </citation>
    <scope>NUCLEOTIDE SEQUENCE [LARGE SCALE GENOMIC DNA]</scope>
    <source>
        <strain>PKo</strain>
    </source>
</reference>
<reference key="2">
    <citation type="journal article" date="2011" name="J. Bacteriol.">
        <title>Whole-genome sequences of two Borrelia afzelii and two Borrelia garinii Lyme disease agent isolates.</title>
        <authorList>
            <person name="Casjens S.R."/>
            <person name="Mongodin E.F."/>
            <person name="Qiu W.G."/>
            <person name="Dunn J.J."/>
            <person name="Luft B.J."/>
            <person name="Fraser-Liggett C.M."/>
            <person name="Schutzer S.E."/>
        </authorList>
    </citation>
    <scope>NUCLEOTIDE SEQUENCE [LARGE SCALE GENOMIC DNA]</scope>
    <source>
        <strain>PKo</strain>
    </source>
</reference>
<feature type="chain" id="PRO_1000025755" description="Chaperonin GroEL">
    <location>
        <begin position="1"/>
        <end position="545"/>
    </location>
</feature>
<feature type="binding site" evidence="1">
    <location>
        <begin position="29"/>
        <end position="32"/>
    </location>
    <ligand>
        <name>ATP</name>
        <dbReference type="ChEBI" id="CHEBI:30616"/>
    </ligand>
</feature>
<feature type="binding site" evidence="1">
    <location>
        <position position="50"/>
    </location>
    <ligand>
        <name>ATP</name>
        <dbReference type="ChEBI" id="CHEBI:30616"/>
    </ligand>
</feature>
<feature type="binding site" evidence="1">
    <location>
        <begin position="86"/>
        <end position="90"/>
    </location>
    <ligand>
        <name>ATP</name>
        <dbReference type="ChEBI" id="CHEBI:30616"/>
    </ligand>
</feature>
<feature type="binding site" evidence="1">
    <location>
        <position position="413"/>
    </location>
    <ligand>
        <name>ATP</name>
        <dbReference type="ChEBI" id="CHEBI:30616"/>
    </ligand>
</feature>
<feature type="binding site" evidence="1">
    <location>
        <position position="495"/>
    </location>
    <ligand>
        <name>ATP</name>
        <dbReference type="ChEBI" id="CHEBI:30616"/>
    </ligand>
</feature>